<reference key="1">
    <citation type="submission" date="2006-08" db="EMBL/GenBank/DDBJ databases">
        <title>Complete sequence of Shewanella frigidimarina NCIMB 400.</title>
        <authorList>
            <consortium name="US DOE Joint Genome Institute"/>
            <person name="Copeland A."/>
            <person name="Lucas S."/>
            <person name="Lapidus A."/>
            <person name="Barry K."/>
            <person name="Detter J.C."/>
            <person name="Glavina del Rio T."/>
            <person name="Hammon N."/>
            <person name="Israni S."/>
            <person name="Dalin E."/>
            <person name="Tice H."/>
            <person name="Pitluck S."/>
            <person name="Fredrickson J.K."/>
            <person name="Kolker E."/>
            <person name="McCuel L.A."/>
            <person name="DiChristina T."/>
            <person name="Nealson K.H."/>
            <person name="Newman D."/>
            <person name="Tiedje J.M."/>
            <person name="Zhou J."/>
            <person name="Romine M.F."/>
            <person name="Culley D.E."/>
            <person name="Serres M."/>
            <person name="Chertkov O."/>
            <person name="Brettin T."/>
            <person name="Bruce D."/>
            <person name="Han C."/>
            <person name="Tapia R."/>
            <person name="Gilna P."/>
            <person name="Schmutz J."/>
            <person name="Larimer F."/>
            <person name="Land M."/>
            <person name="Hauser L."/>
            <person name="Kyrpides N."/>
            <person name="Mikhailova N."/>
            <person name="Richardson P."/>
        </authorList>
    </citation>
    <scope>NUCLEOTIDE SEQUENCE [LARGE SCALE GENOMIC DNA]</scope>
    <source>
        <strain>NCIMB 400</strain>
    </source>
</reference>
<protein>
    <recommendedName>
        <fullName evidence="1">Small ribosomal subunit protein uS9</fullName>
    </recommendedName>
    <alternativeName>
        <fullName evidence="2">30S ribosomal protein S9</fullName>
    </alternativeName>
</protein>
<gene>
    <name evidence="1" type="primary">rpsI</name>
    <name type="ordered locus">Sfri_3359</name>
</gene>
<name>RS9_SHEFN</name>
<feature type="chain" id="PRO_1000051321" description="Small ribosomal subunit protein uS9">
    <location>
        <begin position="1"/>
        <end position="130"/>
    </location>
</feature>
<accession>Q07XR9</accession>
<comment type="similarity">
    <text evidence="1">Belongs to the universal ribosomal protein uS9 family.</text>
</comment>
<evidence type="ECO:0000255" key="1">
    <source>
        <dbReference type="HAMAP-Rule" id="MF_00532"/>
    </source>
</evidence>
<evidence type="ECO:0000305" key="2"/>
<sequence>MSATQYYGTGRRKTSTARVFAKAGSGNIVVNQRPLDVYFGRETARMVVRQPLELVEMTDKLDIYVTVKGGGTTGQAGAIRHGITRALLQLDEALRPTLRSAGFVTRDARKVERKKVGLRKARRKPQFSKR</sequence>
<proteinExistence type="inferred from homology"/>
<keyword id="KW-1185">Reference proteome</keyword>
<keyword id="KW-0687">Ribonucleoprotein</keyword>
<keyword id="KW-0689">Ribosomal protein</keyword>
<organism>
    <name type="scientific">Shewanella frigidimarina (strain NCIMB 400)</name>
    <dbReference type="NCBI Taxonomy" id="318167"/>
    <lineage>
        <taxon>Bacteria</taxon>
        <taxon>Pseudomonadati</taxon>
        <taxon>Pseudomonadota</taxon>
        <taxon>Gammaproteobacteria</taxon>
        <taxon>Alteromonadales</taxon>
        <taxon>Shewanellaceae</taxon>
        <taxon>Shewanella</taxon>
    </lineage>
</organism>
<dbReference type="EMBL" id="CP000447">
    <property type="protein sequence ID" value="ABI73195.1"/>
    <property type="molecule type" value="Genomic_DNA"/>
</dbReference>
<dbReference type="RefSeq" id="WP_011494965.1">
    <property type="nucleotide sequence ID" value="NC_008345.1"/>
</dbReference>
<dbReference type="SMR" id="Q07XR9"/>
<dbReference type="STRING" id="318167.Sfri_3359"/>
<dbReference type="KEGG" id="sfr:Sfri_3359"/>
<dbReference type="eggNOG" id="COG0103">
    <property type="taxonomic scope" value="Bacteria"/>
</dbReference>
<dbReference type="HOGENOM" id="CLU_046483_2_1_6"/>
<dbReference type="OrthoDB" id="9803965at2"/>
<dbReference type="Proteomes" id="UP000000684">
    <property type="component" value="Chromosome"/>
</dbReference>
<dbReference type="GO" id="GO:0022627">
    <property type="term" value="C:cytosolic small ribosomal subunit"/>
    <property type="evidence" value="ECO:0007669"/>
    <property type="project" value="TreeGrafter"/>
</dbReference>
<dbReference type="GO" id="GO:0003723">
    <property type="term" value="F:RNA binding"/>
    <property type="evidence" value="ECO:0007669"/>
    <property type="project" value="TreeGrafter"/>
</dbReference>
<dbReference type="GO" id="GO:0003735">
    <property type="term" value="F:structural constituent of ribosome"/>
    <property type="evidence" value="ECO:0007669"/>
    <property type="project" value="InterPro"/>
</dbReference>
<dbReference type="GO" id="GO:0006412">
    <property type="term" value="P:translation"/>
    <property type="evidence" value="ECO:0007669"/>
    <property type="project" value="UniProtKB-UniRule"/>
</dbReference>
<dbReference type="FunFam" id="3.30.230.10:FF:000001">
    <property type="entry name" value="30S ribosomal protein S9"/>
    <property type="match status" value="1"/>
</dbReference>
<dbReference type="Gene3D" id="3.30.230.10">
    <property type="match status" value="1"/>
</dbReference>
<dbReference type="HAMAP" id="MF_00532_B">
    <property type="entry name" value="Ribosomal_uS9_B"/>
    <property type="match status" value="1"/>
</dbReference>
<dbReference type="InterPro" id="IPR020568">
    <property type="entry name" value="Ribosomal_Su5_D2-typ_SF"/>
</dbReference>
<dbReference type="InterPro" id="IPR000754">
    <property type="entry name" value="Ribosomal_uS9"/>
</dbReference>
<dbReference type="InterPro" id="IPR023035">
    <property type="entry name" value="Ribosomal_uS9_bac/plastid"/>
</dbReference>
<dbReference type="InterPro" id="IPR020574">
    <property type="entry name" value="Ribosomal_uS9_CS"/>
</dbReference>
<dbReference type="InterPro" id="IPR014721">
    <property type="entry name" value="Ribsml_uS5_D2-typ_fold_subgr"/>
</dbReference>
<dbReference type="NCBIfam" id="NF001099">
    <property type="entry name" value="PRK00132.1"/>
    <property type="match status" value="1"/>
</dbReference>
<dbReference type="PANTHER" id="PTHR21569">
    <property type="entry name" value="RIBOSOMAL PROTEIN S9"/>
    <property type="match status" value="1"/>
</dbReference>
<dbReference type="PANTHER" id="PTHR21569:SF1">
    <property type="entry name" value="SMALL RIBOSOMAL SUBUNIT PROTEIN US9M"/>
    <property type="match status" value="1"/>
</dbReference>
<dbReference type="Pfam" id="PF00380">
    <property type="entry name" value="Ribosomal_S9"/>
    <property type="match status" value="1"/>
</dbReference>
<dbReference type="SUPFAM" id="SSF54211">
    <property type="entry name" value="Ribosomal protein S5 domain 2-like"/>
    <property type="match status" value="1"/>
</dbReference>
<dbReference type="PROSITE" id="PS00360">
    <property type="entry name" value="RIBOSOMAL_S9"/>
    <property type="match status" value="1"/>
</dbReference>